<organism>
    <name type="scientific">Mycobacteroides abscessus (strain ATCC 19977 / DSM 44196 / CCUG 20993 / CIP 104536 / JCM 13569 / NCTC 13031 / TMC 1543 / L948)</name>
    <name type="common">Mycobacterium abscessus</name>
    <dbReference type="NCBI Taxonomy" id="561007"/>
    <lineage>
        <taxon>Bacteria</taxon>
        <taxon>Bacillati</taxon>
        <taxon>Actinomycetota</taxon>
        <taxon>Actinomycetes</taxon>
        <taxon>Mycobacteriales</taxon>
        <taxon>Mycobacteriaceae</taxon>
        <taxon>Mycobacteroides</taxon>
        <taxon>Mycobacteroides abscessus</taxon>
    </lineage>
</organism>
<name>Y3498_MYCA9</name>
<gene>
    <name type="ordered locus">MAB_3498c</name>
</gene>
<proteinExistence type="inferred from homology"/>
<reference key="1">
    <citation type="journal article" date="2009" name="PLoS ONE">
        <title>Non mycobacterial virulence genes in the genome of the emerging pathogen Mycobacterium abscessus.</title>
        <authorList>
            <person name="Ripoll F."/>
            <person name="Pasek S."/>
            <person name="Schenowitz C."/>
            <person name="Dossat C."/>
            <person name="Barbe V."/>
            <person name="Rottman M."/>
            <person name="Macheras E."/>
            <person name="Heym B."/>
            <person name="Herrmann J.L."/>
            <person name="Daffe M."/>
            <person name="Brosch R."/>
            <person name="Risler J.L."/>
            <person name="Gaillard J.L."/>
        </authorList>
    </citation>
    <scope>NUCLEOTIDE SEQUENCE [LARGE SCALE GENOMIC DNA]</scope>
    <source>
        <strain>ATCC 19977 / DSM 44196 / CCUG 20993 / CIP 104536 / JCM 13569 / NCTC 13031 / TMC 1543 / L948</strain>
    </source>
</reference>
<dbReference type="EMBL" id="CU458896">
    <property type="protein sequence ID" value="CAM63574.1"/>
    <property type="molecule type" value="Genomic_DNA"/>
</dbReference>
<dbReference type="RefSeq" id="WP_005111845.1">
    <property type="nucleotide sequence ID" value="NZ_MLCG01000001.1"/>
</dbReference>
<dbReference type="SMR" id="B1MEW8"/>
<dbReference type="GeneID" id="93380439"/>
<dbReference type="KEGG" id="mab:MAB_3498c"/>
<dbReference type="Proteomes" id="UP000007137">
    <property type="component" value="Chromosome"/>
</dbReference>
<dbReference type="GO" id="GO:0005576">
    <property type="term" value="C:extracellular region"/>
    <property type="evidence" value="ECO:0007669"/>
    <property type="project" value="TreeGrafter"/>
</dbReference>
<dbReference type="GO" id="GO:0005886">
    <property type="term" value="C:plasma membrane"/>
    <property type="evidence" value="ECO:0007669"/>
    <property type="project" value="UniProtKB-SubCell"/>
</dbReference>
<dbReference type="HAMAP" id="MF_01600">
    <property type="entry name" value="UPF0182"/>
    <property type="match status" value="1"/>
</dbReference>
<dbReference type="InterPro" id="IPR005372">
    <property type="entry name" value="UPF0182"/>
</dbReference>
<dbReference type="NCBIfam" id="NF000825">
    <property type="entry name" value="PRK00068.1"/>
    <property type="match status" value="1"/>
</dbReference>
<dbReference type="NCBIfam" id="NF009097">
    <property type="entry name" value="PRK12438.1"/>
    <property type="match status" value="1"/>
</dbReference>
<dbReference type="PANTHER" id="PTHR39344">
    <property type="entry name" value="UPF0182 PROTEIN SLL1060"/>
    <property type="match status" value="1"/>
</dbReference>
<dbReference type="PANTHER" id="PTHR39344:SF1">
    <property type="entry name" value="UPF0182 PROTEIN SLL1060"/>
    <property type="match status" value="1"/>
</dbReference>
<dbReference type="Pfam" id="PF03699">
    <property type="entry name" value="UPF0182"/>
    <property type="match status" value="1"/>
</dbReference>
<feature type="chain" id="PRO_1000148061" description="UPF0182 protein MAB_3498c">
    <location>
        <begin position="1"/>
        <end position="988"/>
    </location>
</feature>
<feature type="transmembrane region" description="Helical" evidence="1">
    <location>
        <begin position="19"/>
        <end position="39"/>
    </location>
</feature>
<feature type="transmembrane region" description="Helical" evidence="1">
    <location>
        <begin position="63"/>
        <end position="83"/>
    </location>
</feature>
<feature type="transmembrane region" description="Helical" evidence="1">
    <location>
        <begin position="114"/>
        <end position="134"/>
    </location>
</feature>
<feature type="transmembrane region" description="Helical" evidence="1">
    <location>
        <begin position="176"/>
        <end position="196"/>
    </location>
</feature>
<feature type="transmembrane region" description="Helical" evidence="1">
    <location>
        <begin position="211"/>
        <end position="231"/>
    </location>
</feature>
<feature type="transmembrane region" description="Helical" evidence="1">
    <location>
        <begin position="260"/>
        <end position="280"/>
    </location>
</feature>
<feature type="transmembrane region" description="Helical" evidence="1">
    <location>
        <begin position="288"/>
        <end position="308"/>
    </location>
</feature>
<protein>
    <recommendedName>
        <fullName evidence="1">UPF0182 protein MAB_3498c</fullName>
    </recommendedName>
</protein>
<sequence>MGMRPNGALPRLTRRSRRLVAASLVIVVLLLIGPRLVDTYINWLWFGELGFRGVFTTVLLTRLALFLIVGTLVAAVVFAGFGLAYRARPVFVPAKGPGDALAQYRALILSRVRLFLIGVPILIGVLAGVVAQSYWMPVQLFLEGGDFGIKDPQFGLDLGFFAFDLPFYRFVLTYLFIAASIALIVNGLVHYIFGGIRLSGRSGTLSRPARIQLITFAGILVLLKVAAYWLDRYELLSHTRAGKPFTGAGYTDINAVLPAKLILLAIAVICAVAVFSALVLKDLRIPAIGLALLLLSSLVVGAGWPLIVEQFSVKPNAAQKESEYIARSIKATRDAYGLTDDVVTYRDYSGTASSPAGSQQLAKQVAADRSTIANIRVLDPNIISPAFTQLQQGKNFYAFPDALSIDRYQDKNGSLRDYVVAARELDPAKLRDNQRDWINRHTVYTHGNGFIAAPANTVRGVADKPDENGGYPEFLVNAVDDNGKVLSDGPAPLAQPRVYYGPIIASDTNDYAIVGKNGNDREYDYENNAGTKNSTYTGSGGVPVGGALARTVFGLKYAERNFLFSNVIGDNSKILFNRDPSRRVEAVAPWLTVDSGTYPAIVDKRLVWIVDGYTTLDNYPYSQQTSLSEATFDSQVGRTGGALPNQQVSYIRNSVKATVDAYDGTVTLYQQDEKDPVLKAWMKIFPGTVKPKADISDDLKRHLRYPEDLFKVQRTLLARYHVNDPVTFFSTSDFWQVPDDPNAPTGSQPPYYIVAKDITKNDNSASFQLTSALNRFQRDFLAAYVSASSDPETYGKITVLTVPGTVQGPKLVNNAITTDNQVSSHVGIIKNQNILKWGNLLTLPVANGGLLFVEPLYASPGQGDQSSYPRLIRVGMYYNGKVGYATTVRDALDMVFGPGAGATATAPAVEPGAMPPAPPGGQNVPVVPPVTPPPTGSAELSSAKAAALQEVQRAIGEVKEAQKSGDFARYGQALKGLDDAMTKFTQAR</sequence>
<accession>B1MEW8</accession>
<evidence type="ECO:0000255" key="1">
    <source>
        <dbReference type="HAMAP-Rule" id="MF_01600"/>
    </source>
</evidence>
<comment type="subcellular location">
    <subcellularLocation>
        <location evidence="1">Cell membrane</location>
        <topology evidence="1">Multi-pass membrane protein</topology>
    </subcellularLocation>
</comment>
<comment type="similarity">
    <text evidence="1">Belongs to the UPF0182 family.</text>
</comment>
<keyword id="KW-1003">Cell membrane</keyword>
<keyword id="KW-0472">Membrane</keyword>
<keyword id="KW-1185">Reference proteome</keyword>
<keyword id="KW-0812">Transmembrane</keyword>
<keyword id="KW-1133">Transmembrane helix</keyword>